<sequence>MPRAKSSVVSRKRHKKILKLAKGYFGAKSKLFRVAKQQVMKSLMYAYRDRRARKREFRKLWITRINAAARMHGLTYSRMMNGLKKAGVEINRKMLADLAVNDKNAFAELVEIAKKNL</sequence>
<organism>
    <name type="scientific">Carboxydothermus hydrogenoformans (strain ATCC BAA-161 / DSM 6008 / Z-2901)</name>
    <dbReference type="NCBI Taxonomy" id="246194"/>
    <lineage>
        <taxon>Bacteria</taxon>
        <taxon>Bacillati</taxon>
        <taxon>Bacillota</taxon>
        <taxon>Clostridia</taxon>
        <taxon>Thermoanaerobacterales</taxon>
        <taxon>Thermoanaerobacteraceae</taxon>
        <taxon>Carboxydothermus</taxon>
    </lineage>
</organism>
<keyword id="KW-1185">Reference proteome</keyword>
<keyword id="KW-0687">Ribonucleoprotein</keyword>
<keyword id="KW-0689">Ribosomal protein</keyword>
<keyword id="KW-0694">RNA-binding</keyword>
<keyword id="KW-0699">rRNA-binding</keyword>
<gene>
    <name evidence="1" type="primary">rplT</name>
    <name type="ordered locus">CHY_1576</name>
</gene>
<dbReference type="EMBL" id="CP000141">
    <property type="protein sequence ID" value="ABB15018.1"/>
    <property type="molecule type" value="Genomic_DNA"/>
</dbReference>
<dbReference type="RefSeq" id="WP_011344480.1">
    <property type="nucleotide sequence ID" value="NC_007503.1"/>
</dbReference>
<dbReference type="SMR" id="Q3ABS9"/>
<dbReference type="FunCoup" id="Q3ABS9">
    <property type="interactions" value="431"/>
</dbReference>
<dbReference type="STRING" id="246194.CHY_1576"/>
<dbReference type="KEGG" id="chy:CHY_1576"/>
<dbReference type="eggNOG" id="COG0292">
    <property type="taxonomic scope" value="Bacteria"/>
</dbReference>
<dbReference type="HOGENOM" id="CLU_123265_0_1_9"/>
<dbReference type="InParanoid" id="Q3ABS9"/>
<dbReference type="OrthoDB" id="9808966at2"/>
<dbReference type="Proteomes" id="UP000002706">
    <property type="component" value="Chromosome"/>
</dbReference>
<dbReference type="GO" id="GO:1990904">
    <property type="term" value="C:ribonucleoprotein complex"/>
    <property type="evidence" value="ECO:0007669"/>
    <property type="project" value="UniProtKB-KW"/>
</dbReference>
<dbReference type="GO" id="GO:0005840">
    <property type="term" value="C:ribosome"/>
    <property type="evidence" value="ECO:0007669"/>
    <property type="project" value="UniProtKB-KW"/>
</dbReference>
<dbReference type="GO" id="GO:0019843">
    <property type="term" value="F:rRNA binding"/>
    <property type="evidence" value="ECO:0007669"/>
    <property type="project" value="UniProtKB-UniRule"/>
</dbReference>
<dbReference type="GO" id="GO:0003735">
    <property type="term" value="F:structural constituent of ribosome"/>
    <property type="evidence" value="ECO:0007669"/>
    <property type="project" value="InterPro"/>
</dbReference>
<dbReference type="GO" id="GO:0000027">
    <property type="term" value="P:ribosomal large subunit assembly"/>
    <property type="evidence" value="ECO:0007669"/>
    <property type="project" value="UniProtKB-UniRule"/>
</dbReference>
<dbReference type="GO" id="GO:0006412">
    <property type="term" value="P:translation"/>
    <property type="evidence" value="ECO:0007669"/>
    <property type="project" value="InterPro"/>
</dbReference>
<dbReference type="CDD" id="cd07026">
    <property type="entry name" value="Ribosomal_L20"/>
    <property type="match status" value="1"/>
</dbReference>
<dbReference type="FunFam" id="1.10.1900.20:FF:000001">
    <property type="entry name" value="50S ribosomal protein L20"/>
    <property type="match status" value="1"/>
</dbReference>
<dbReference type="Gene3D" id="6.10.160.10">
    <property type="match status" value="1"/>
</dbReference>
<dbReference type="Gene3D" id="1.10.1900.20">
    <property type="entry name" value="Ribosomal protein L20"/>
    <property type="match status" value="1"/>
</dbReference>
<dbReference type="HAMAP" id="MF_00382">
    <property type="entry name" value="Ribosomal_bL20"/>
    <property type="match status" value="1"/>
</dbReference>
<dbReference type="InterPro" id="IPR005813">
    <property type="entry name" value="Ribosomal_bL20"/>
</dbReference>
<dbReference type="InterPro" id="IPR049946">
    <property type="entry name" value="RIBOSOMAL_L20_CS"/>
</dbReference>
<dbReference type="InterPro" id="IPR035566">
    <property type="entry name" value="Ribosomal_protein_bL20_C"/>
</dbReference>
<dbReference type="NCBIfam" id="TIGR01032">
    <property type="entry name" value="rplT_bact"/>
    <property type="match status" value="1"/>
</dbReference>
<dbReference type="PANTHER" id="PTHR10986">
    <property type="entry name" value="39S RIBOSOMAL PROTEIN L20"/>
    <property type="match status" value="1"/>
</dbReference>
<dbReference type="Pfam" id="PF00453">
    <property type="entry name" value="Ribosomal_L20"/>
    <property type="match status" value="1"/>
</dbReference>
<dbReference type="PRINTS" id="PR00062">
    <property type="entry name" value="RIBOSOMALL20"/>
</dbReference>
<dbReference type="SUPFAM" id="SSF74731">
    <property type="entry name" value="Ribosomal protein L20"/>
    <property type="match status" value="1"/>
</dbReference>
<dbReference type="PROSITE" id="PS00937">
    <property type="entry name" value="RIBOSOMAL_L20"/>
    <property type="match status" value="1"/>
</dbReference>
<reference key="1">
    <citation type="journal article" date="2005" name="PLoS Genet.">
        <title>Life in hot carbon monoxide: the complete genome sequence of Carboxydothermus hydrogenoformans Z-2901.</title>
        <authorList>
            <person name="Wu M."/>
            <person name="Ren Q."/>
            <person name="Durkin A.S."/>
            <person name="Daugherty S.C."/>
            <person name="Brinkac L.M."/>
            <person name="Dodson R.J."/>
            <person name="Madupu R."/>
            <person name="Sullivan S.A."/>
            <person name="Kolonay J.F."/>
            <person name="Nelson W.C."/>
            <person name="Tallon L.J."/>
            <person name="Jones K.M."/>
            <person name="Ulrich L.E."/>
            <person name="Gonzalez J.M."/>
            <person name="Zhulin I.B."/>
            <person name="Robb F.T."/>
            <person name="Eisen J.A."/>
        </authorList>
    </citation>
    <scope>NUCLEOTIDE SEQUENCE [LARGE SCALE GENOMIC DNA]</scope>
    <source>
        <strain>ATCC BAA-161 / DSM 6008 / Z-2901</strain>
    </source>
</reference>
<protein>
    <recommendedName>
        <fullName evidence="1">Large ribosomal subunit protein bL20</fullName>
    </recommendedName>
    <alternativeName>
        <fullName evidence="2">50S ribosomal protein L20</fullName>
    </alternativeName>
</protein>
<accession>Q3ABS9</accession>
<evidence type="ECO:0000255" key="1">
    <source>
        <dbReference type="HAMAP-Rule" id="MF_00382"/>
    </source>
</evidence>
<evidence type="ECO:0000305" key="2"/>
<feature type="chain" id="PRO_0000243667" description="Large ribosomal subunit protein bL20">
    <location>
        <begin position="1"/>
        <end position="117"/>
    </location>
</feature>
<proteinExistence type="inferred from homology"/>
<name>RL20_CARHZ</name>
<comment type="function">
    <text evidence="1">Binds directly to 23S ribosomal RNA and is necessary for the in vitro assembly process of the 50S ribosomal subunit. It is not involved in the protein synthesizing functions of that subunit.</text>
</comment>
<comment type="similarity">
    <text evidence="1">Belongs to the bacterial ribosomal protein bL20 family.</text>
</comment>